<organism>
    <name type="scientific">Protochlamydia amoebophila (strain UWE25)</name>
    <dbReference type="NCBI Taxonomy" id="264201"/>
    <lineage>
        <taxon>Bacteria</taxon>
        <taxon>Pseudomonadati</taxon>
        <taxon>Chlamydiota</taxon>
        <taxon>Chlamydiia</taxon>
        <taxon>Parachlamydiales</taxon>
        <taxon>Parachlamydiaceae</taxon>
        <taxon>Candidatus Protochlamydia</taxon>
    </lineage>
</organism>
<sequence>MRHLNQTCKLNRTTSHRRCMFANMLKSLISNERIETTVPKAKALRRYADRMITLAKKNTLSARRQAIAELMIRFNPLTPKEQRAAKEGNTQAYNDDRLVIGKLFDVLGTRFATRQGGYTRIVKQGHRVGDNAQTCIIEYLTD</sequence>
<feature type="chain" id="PRO_1000055900" description="Large ribosomal subunit protein bL17">
    <location>
        <begin position="1"/>
        <end position="142"/>
    </location>
</feature>
<comment type="subunit">
    <text evidence="1">Part of the 50S ribosomal subunit. Contacts protein L32.</text>
</comment>
<comment type="similarity">
    <text evidence="1">Belongs to the bacterial ribosomal protein bL17 family.</text>
</comment>
<dbReference type="EMBL" id="BX908798">
    <property type="protein sequence ID" value="CAF23158.1"/>
    <property type="molecule type" value="Genomic_DNA"/>
</dbReference>
<dbReference type="RefSeq" id="WP_011174984.1">
    <property type="nucleotide sequence ID" value="NC_005861.2"/>
</dbReference>
<dbReference type="SMR" id="Q6ME41"/>
<dbReference type="STRING" id="264201.pc0434"/>
<dbReference type="KEGG" id="pcu:PC_RS02120"/>
<dbReference type="eggNOG" id="COG0203">
    <property type="taxonomic scope" value="Bacteria"/>
</dbReference>
<dbReference type="HOGENOM" id="CLU_074407_2_0_0"/>
<dbReference type="OrthoDB" id="9809073at2"/>
<dbReference type="Proteomes" id="UP000000529">
    <property type="component" value="Chromosome"/>
</dbReference>
<dbReference type="GO" id="GO:0022625">
    <property type="term" value="C:cytosolic large ribosomal subunit"/>
    <property type="evidence" value="ECO:0007669"/>
    <property type="project" value="TreeGrafter"/>
</dbReference>
<dbReference type="GO" id="GO:0003735">
    <property type="term" value="F:structural constituent of ribosome"/>
    <property type="evidence" value="ECO:0007669"/>
    <property type="project" value="InterPro"/>
</dbReference>
<dbReference type="GO" id="GO:0006412">
    <property type="term" value="P:translation"/>
    <property type="evidence" value="ECO:0007669"/>
    <property type="project" value="UniProtKB-UniRule"/>
</dbReference>
<dbReference type="Gene3D" id="3.90.1030.10">
    <property type="entry name" value="Ribosomal protein L17"/>
    <property type="match status" value="1"/>
</dbReference>
<dbReference type="HAMAP" id="MF_01368">
    <property type="entry name" value="Ribosomal_bL17"/>
    <property type="match status" value="1"/>
</dbReference>
<dbReference type="InterPro" id="IPR000456">
    <property type="entry name" value="Ribosomal_bL17"/>
</dbReference>
<dbReference type="InterPro" id="IPR047859">
    <property type="entry name" value="Ribosomal_bL17_CS"/>
</dbReference>
<dbReference type="InterPro" id="IPR036373">
    <property type="entry name" value="Ribosomal_bL17_sf"/>
</dbReference>
<dbReference type="NCBIfam" id="TIGR00059">
    <property type="entry name" value="L17"/>
    <property type="match status" value="1"/>
</dbReference>
<dbReference type="PANTHER" id="PTHR14413:SF16">
    <property type="entry name" value="LARGE RIBOSOMAL SUBUNIT PROTEIN BL17M"/>
    <property type="match status" value="1"/>
</dbReference>
<dbReference type="PANTHER" id="PTHR14413">
    <property type="entry name" value="RIBOSOMAL PROTEIN L17"/>
    <property type="match status" value="1"/>
</dbReference>
<dbReference type="Pfam" id="PF01196">
    <property type="entry name" value="Ribosomal_L17"/>
    <property type="match status" value="1"/>
</dbReference>
<dbReference type="SUPFAM" id="SSF64263">
    <property type="entry name" value="Prokaryotic ribosomal protein L17"/>
    <property type="match status" value="1"/>
</dbReference>
<dbReference type="PROSITE" id="PS01167">
    <property type="entry name" value="RIBOSOMAL_L17"/>
    <property type="match status" value="1"/>
</dbReference>
<gene>
    <name evidence="1" type="primary">rplQ</name>
    <name type="ordered locus">pc0434</name>
</gene>
<keyword id="KW-1185">Reference proteome</keyword>
<keyword id="KW-0687">Ribonucleoprotein</keyword>
<keyword id="KW-0689">Ribosomal protein</keyword>
<name>RL17_PARUW</name>
<evidence type="ECO:0000255" key="1">
    <source>
        <dbReference type="HAMAP-Rule" id="MF_01368"/>
    </source>
</evidence>
<evidence type="ECO:0000305" key="2"/>
<protein>
    <recommendedName>
        <fullName evidence="1">Large ribosomal subunit protein bL17</fullName>
    </recommendedName>
    <alternativeName>
        <fullName evidence="2">50S ribosomal protein L17</fullName>
    </alternativeName>
</protein>
<reference key="1">
    <citation type="journal article" date="2004" name="Science">
        <title>Illuminating the evolutionary history of chlamydiae.</title>
        <authorList>
            <person name="Horn M."/>
            <person name="Collingro A."/>
            <person name="Schmitz-Esser S."/>
            <person name="Beier C.L."/>
            <person name="Purkhold U."/>
            <person name="Fartmann B."/>
            <person name="Brandt P."/>
            <person name="Nyakatura G.J."/>
            <person name="Droege M."/>
            <person name="Frishman D."/>
            <person name="Rattei T."/>
            <person name="Mewes H.-W."/>
            <person name="Wagner M."/>
        </authorList>
    </citation>
    <scope>NUCLEOTIDE SEQUENCE [LARGE SCALE GENOMIC DNA]</scope>
    <source>
        <strain>UWE25</strain>
    </source>
</reference>
<accession>Q6ME41</accession>
<proteinExistence type="inferred from homology"/>